<sequence>MDLLATTSAVAVSSYALLSTIYKSAQALYAQPTNPSSLQNDLEQAGVVLPSVDVIVPCFNEDPNTLSECLASIASQDYAGKLRVIVVDDGSANRDLLGPVHKIYASDPRFRIILMAKNVGKRKAQIAAIRSSSGDLVLNVDSDTILAVDVVTKLVSKMQDPDVGAAMGQLVASNRNETWLTK</sequence>
<name>NODC_BRAEL</name>
<comment type="function">
    <text>Involved in the synthesis of Nod factor, a sulfated N-acyl-beta-1,4-tetrasaccharide of N-acetylglucosamine which initiates a series of events in the host plant species leading eventually to nodulation.</text>
</comment>
<comment type="subcellular location">
    <subcellularLocation>
        <location evidence="1">Cell membrane</location>
        <topology evidence="1">Peripheral membrane protein</topology>
    </subcellularLocation>
</comment>
<comment type="similarity">
    <text evidence="1">Belongs to the NodC/HAS family.</text>
</comment>
<dbReference type="EC" id="2.4.1.-"/>
<dbReference type="EMBL" id="U04609">
    <property type="protein sequence ID" value="AAA63602.1"/>
    <property type="molecule type" value="Genomic_DNA"/>
</dbReference>
<dbReference type="EMBL" id="D28965">
    <property type="protein sequence ID" value="BAA06090.1"/>
    <property type="molecule type" value="Genomic_DNA"/>
</dbReference>
<dbReference type="EMBL" id="D28963">
    <property type="protein sequence ID" value="BAA06088.1"/>
    <property type="molecule type" value="Genomic_DNA"/>
</dbReference>
<dbReference type="EMBL" id="D28964">
    <property type="protein sequence ID" value="BAA06089.1"/>
    <property type="molecule type" value="Genomic_DNA"/>
</dbReference>
<dbReference type="SMR" id="P53417"/>
<dbReference type="CAZy" id="GT2">
    <property type="family name" value="Glycosyltransferase Family 2"/>
</dbReference>
<dbReference type="GO" id="GO:0005886">
    <property type="term" value="C:plasma membrane"/>
    <property type="evidence" value="ECO:0007669"/>
    <property type="project" value="UniProtKB-SubCell"/>
</dbReference>
<dbReference type="GO" id="GO:0050501">
    <property type="term" value="F:hyaluronan synthase activity"/>
    <property type="evidence" value="ECO:0007669"/>
    <property type="project" value="TreeGrafter"/>
</dbReference>
<dbReference type="GO" id="GO:0085029">
    <property type="term" value="P:extracellular matrix assembly"/>
    <property type="evidence" value="ECO:0007669"/>
    <property type="project" value="TreeGrafter"/>
</dbReference>
<dbReference type="GO" id="GO:0030213">
    <property type="term" value="P:hyaluronan biosynthetic process"/>
    <property type="evidence" value="ECO:0007669"/>
    <property type="project" value="TreeGrafter"/>
</dbReference>
<dbReference type="CDD" id="cd06423">
    <property type="entry name" value="CESA_like"/>
    <property type="match status" value="1"/>
</dbReference>
<dbReference type="Gene3D" id="3.90.550.10">
    <property type="entry name" value="Spore Coat Polysaccharide Biosynthesis Protein SpsA, Chain A"/>
    <property type="match status" value="1"/>
</dbReference>
<dbReference type="InterPro" id="IPR001173">
    <property type="entry name" value="Glyco_trans_2-like"/>
</dbReference>
<dbReference type="InterPro" id="IPR029044">
    <property type="entry name" value="Nucleotide-diphossugar_trans"/>
</dbReference>
<dbReference type="PANTHER" id="PTHR22913">
    <property type="entry name" value="HYALURONAN SYNTHASE"/>
    <property type="match status" value="1"/>
</dbReference>
<dbReference type="PANTHER" id="PTHR22913:SF12">
    <property type="entry name" value="MANNURONAN SYNTHASE"/>
    <property type="match status" value="1"/>
</dbReference>
<dbReference type="Pfam" id="PF00535">
    <property type="entry name" value="Glycos_transf_2"/>
    <property type="match status" value="1"/>
</dbReference>
<dbReference type="SUPFAM" id="SSF53448">
    <property type="entry name" value="Nucleotide-diphospho-sugar transferases"/>
    <property type="match status" value="1"/>
</dbReference>
<evidence type="ECO:0000305" key="1"/>
<feature type="chain" id="PRO_0000197184" description="N-acetylglucosaminyltransferase">
    <location>
        <begin position="1"/>
        <end position="182" status="greater than"/>
    </location>
</feature>
<feature type="sequence variant" description="In strain: USDA 61.">
    <original>V</original>
    <variation>A</variation>
    <location>
        <position position="151"/>
    </location>
</feature>
<feature type="non-terminal residue">
    <location>
        <position position="182"/>
    </location>
</feature>
<organism>
    <name type="scientific">Bradyrhizobium elkanii</name>
    <dbReference type="NCBI Taxonomy" id="29448"/>
    <lineage>
        <taxon>Bacteria</taxon>
        <taxon>Pseudomonadati</taxon>
        <taxon>Pseudomonadota</taxon>
        <taxon>Alphaproteobacteria</taxon>
        <taxon>Hyphomicrobiales</taxon>
        <taxon>Nitrobacteraceae</taxon>
        <taxon>Bradyrhizobium</taxon>
    </lineage>
</organism>
<proteinExistence type="inferred from homology"/>
<gene>
    <name type="primary">nodC</name>
</gene>
<reference key="1">
    <citation type="journal article" date="1994" name="Mol. Plant Microbe Interact.">
        <title>DNA sequence of the common nodulation genes of Bradyrhizobium elkanii and their phylogenetic relationship to those of other nodulating bacteria.</title>
        <authorList>
            <person name="Dobert R.C."/>
            <person name="Breil B.T."/>
            <person name="Triplett E.W."/>
        </authorList>
    </citation>
    <scope>NUCLEOTIDE SEQUENCE [GENOMIC DNA] OF 1-91</scope>
    <source>
        <strain>USDA 94</strain>
    </source>
</reference>
<reference key="2">
    <citation type="journal article" date="1995" name="J. Bacteriol.">
        <title>Phylogeny of Sym plasmids of rhizobia by PCR-based sequencing of a nodC segment.</title>
        <authorList>
            <person name="Ueda T."/>
            <person name="Suga Y."/>
            <person name="Yahiro N."/>
            <person name="Matsuguchi T."/>
        </authorList>
    </citation>
    <scope>NUCLEOTIDE SEQUENCE [GENOMIC DNA] OF 92-182</scope>
    <source>
        <strain>USDA 46</strain>
        <strain>USDA 61</strain>
        <strain>USDA 94</strain>
    </source>
</reference>
<keyword id="KW-1003">Cell membrane</keyword>
<keyword id="KW-0328">Glycosyltransferase</keyword>
<keyword id="KW-0472">Membrane</keyword>
<keyword id="KW-0536">Nodulation</keyword>
<keyword id="KW-0808">Transferase</keyword>
<accession>P53417</accession>
<protein>
    <recommendedName>
        <fullName>N-acetylglucosaminyltransferase</fullName>
        <ecNumber>2.4.1.-</ecNumber>
    </recommendedName>
    <alternativeName>
        <fullName>Nodulation protein C</fullName>
    </alternativeName>
</protein>